<feature type="chain" id="PRO_1000068224" description="Hydroxyacylglutathione hydrolase">
    <location>
        <begin position="1"/>
        <end position="252"/>
    </location>
</feature>
<feature type="binding site" evidence="1">
    <location>
        <position position="54"/>
    </location>
    <ligand>
        <name>Zn(2+)</name>
        <dbReference type="ChEBI" id="CHEBI:29105"/>
        <label>1</label>
    </ligand>
</feature>
<feature type="binding site" evidence="1">
    <location>
        <position position="56"/>
    </location>
    <ligand>
        <name>Zn(2+)</name>
        <dbReference type="ChEBI" id="CHEBI:29105"/>
        <label>1</label>
    </ligand>
</feature>
<feature type="binding site" evidence="1">
    <location>
        <position position="58"/>
    </location>
    <ligand>
        <name>Zn(2+)</name>
        <dbReference type="ChEBI" id="CHEBI:29105"/>
        <label>2</label>
    </ligand>
</feature>
<feature type="binding site" evidence="1">
    <location>
        <position position="59"/>
    </location>
    <ligand>
        <name>Zn(2+)</name>
        <dbReference type="ChEBI" id="CHEBI:29105"/>
        <label>2</label>
    </ligand>
</feature>
<feature type="binding site" evidence="1">
    <location>
        <position position="113"/>
    </location>
    <ligand>
        <name>Zn(2+)</name>
        <dbReference type="ChEBI" id="CHEBI:29105"/>
        <label>1</label>
    </ligand>
</feature>
<feature type="binding site" evidence="1">
    <location>
        <position position="132"/>
    </location>
    <ligand>
        <name>Zn(2+)</name>
        <dbReference type="ChEBI" id="CHEBI:29105"/>
        <label>1</label>
    </ligand>
</feature>
<feature type="binding site" evidence="1">
    <location>
        <position position="132"/>
    </location>
    <ligand>
        <name>Zn(2+)</name>
        <dbReference type="ChEBI" id="CHEBI:29105"/>
        <label>2</label>
    </ligand>
</feature>
<feature type="binding site" evidence="1">
    <location>
        <position position="170"/>
    </location>
    <ligand>
        <name>Zn(2+)</name>
        <dbReference type="ChEBI" id="CHEBI:29105"/>
        <label>2</label>
    </ligand>
</feature>
<evidence type="ECO:0000255" key="1">
    <source>
        <dbReference type="HAMAP-Rule" id="MF_01374"/>
    </source>
</evidence>
<organism>
    <name type="scientific">Thermosynechococcus vestitus (strain NIES-2133 / IAM M-273 / BP-1)</name>
    <dbReference type="NCBI Taxonomy" id="197221"/>
    <lineage>
        <taxon>Bacteria</taxon>
        <taxon>Bacillati</taxon>
        <taxon>Cyanobacteriota</taxon>
        <taxon>Cyanophyceae</taxon>
        <taxon>Acaryochloridales</taxon>
        <taxon>Thermosynechococcaceae</taxon>
        <taxon>Thermosynechococcus</taxon>
    </lineage>
</organism>
<accession>Q8DIF1</accession>
<keyword id="KW-0378">Hydrolase</keyword>
<keyword id="KW-0479">Metal-binding</keyword>
<keyword id="KW-1185">Reference proteome</keyword>
<keyword id="KW-0862">Zinc</keyword>
<name>GLO2_THEVB</name>
<comment type="function">
    <text evidence="1">Thiolesterase that catalyzes the hydrolysis of S-D-lactoyl-glutathione to form glutathione and D-lactic acid.</text>
</comment>
<comment type="catalytic activity">
    <reaction evidence="1">
        <text>an S-(2-hydroxyacyl)glutathione + H2O = a 2-hydroxy carboxylate + glutathione + H(+)</text>
        <dbReference type="Rhea" id="RHEA:21864"/>
        <dbReference type="ChEBI" id="CHEBI:15377"/>
        <dbReference type="ChEBI" id="CHEBI:15378"/>
        <dbReference type="ChEBI" id="CHEBI:57925"/>
        <dbReference type="ChEBI" id="CHEBI:58896"/>
        <dbReference type="ChEBI" id="CHEBI:71261"/>
        <dbReference type="EC" id="3.1.2.6"/>
    </reaction>
</comment>
<comment type="cofactor">
    <cofactor evidence="1">
        <name>Zn(2+)</name>
        <dbReference type="ChEBI" id="CHEBI:29105"/>
    </cofactor>
    <text evidence="1">Binds 2 Zn(2+) ions per subunit.</text>
</comment>
<comment type="pathway">
    <text evidence="1">Secondary metabolite metabolism; methylglyoxal degradation; (R)-lactate from methylglyoxal: step 2/2.</text>
</comment>
<comment type="subunit">
    <text evidence="1">Monomer.</text>
</comment>
<comment type="similarity">
    <text evidence="1">Belongs to the metallo-beta-lactamase superfamily. Glyoxalase II family.</text>
</comment>
<reference key="1">
    <citation type="journal article" date="2002" name="DNA Res.">
        <title>Complete genome structure of the thermophilic cyanobacterium Thermosynechococcus elongatus BP-1.</title>
        <authorList>
            <person name="Nakamura Y."/>
            <person name="Kaneko T."/>
            <person name="Sato S."/>
            <person name="Ikeuchi M."/>
            <person name="Katoh H."/>
            <person name="Sasamoto S."/>
            <person name="Watanabe A."/>
            <person name="Iriguchi M."/>
            <person name="Kawashima K."/>
            <person name="Kimura T."/>
            <person name="Kishida Y."/>
            <person name="Kiyokawa C."/>
            <person name="Kohara M."/>
            <person name="Matsumoto M."/>
            <person name="Matsuno A."/>
            <person name="Nakazaki N."/>
            <person name="Shimpo S."/>
            <person name="Sugimoto M."/>
            <person name="Takeuchi C."/>
            <person name="Yamada M."/>
            <person name="Tabata S."/>
        </authorList>
    </citation>
    <scope>NUCLEOTIDE SEQUENCE [LARGE SCALE GENOMIC DNA]</scope>
    <source>
        <strain>NIES-2133 / IAM M-273 / BP-1</strain>
    </source>
</reference>
<gene>
    <name evidence="1" type="primary">gloB</name>
    <name type="ordered locus">tll1639</name>
</gene>
<sequence>MMIYRLNALTDNYIFLLHDPQTGTAAVVDPAEPEPVLAKLAELGATLRAIFNTHHHWDHVGANCALRSRFPDIAVYGSSEDQGRIPEQTVFLKAGDRVPFGQTYFDVLFVPGHTRGHIAYYAPTTGDLFCGDTLFGGGCGRLFEGSPAQMLDSLNQLRQLPEETRVWCAHEYTQKNLSFALTVEADNPTLQERYAQVCRDRAQGKATIPSTIGLEKATNPFLRCEVRSIQIAVGATTPLQTFTRLRGKRDQY</sequence>
<proteinExistence type="inferred from homology"/>
<protein>
    <recommendedName>
        <fullName evidence="1">Hydroxyacylglutathione hydrolase</fullName>
        <ecNumber evidence="1">3.1.2.6</ecNumber>
    </recommendedName>
    <alternativeName>
        <fullName evidence="1">Glyoxalase II</fullName>
        <shortName evidence="1">Glx II</shortName>
    </alternativeName>
</protein>
<dbReference type="EC" id="3.1.2.6" evidence="1"/>
<dbReference type="EMBL" id="BA000039">
    <property type="protein sequence ID" value="BAC09191.1"/>
    <property type="molecule type" value="Genomic_DNA"/>
</dbReference>
<dbReference type="RefSeq" id="NP_682429.1">
    <property type="nucleotide sequence ID" value="NC_004113.1"/>
</dbReference>
<dbReference type="RefSeq" id="WP_011057476.1">
    <property type="nucleotide sequence ID" value="NC_004113.1"/>
</dbReference>
<dbReference type="SMR" id="Q8DIF1"/>
<dbReference type="STRING" id="197221.gene:10748241"/>
<dbReference type="EnsemblBacteria" id="BAC09191">
    <property type="protein sequence ID" value="BAC09191"/>
    <property type="gene ID" value="BAC09191"/>
</dbReference>
<dbReference type="KEGG" id="tel:tll1639"/>
<dbReference type="PATRIC" id="fig|197221.4.peg.1719"/>
<dbReference type="eggNOG" id="COG0491">
    <property type="taxonomic scope" value="Bacteria"/>
</dbReference>
<dbReference type="UniPathway" id="UPA00619">
    <property type="reaction ID" value="UER00676"/>
</dbReference>
<dbReference type="Proteomes" id="UP000000440">
    <property type="component" value="Chromosome"/>
</dbReference>
<dbReference type="GO" id="GO:0004416">
    <property type="term" value="F:hydroxyacylglutathione hydrolase activity"/>
    <property type="evidence" value="ECO:0007669"/>
    <property type="project" value="UniProtKB-UniRule"/>
</dbReference>
<dbReference type="GO" id="GO:0046872">
    <property type="term" value="F:metal ion binding"/>
    <property type="evidence" value="ECO:0007669"/>
    <property type="project" value="UniProtKB-KW"/>
</dbReference>
<dbReference type="GO" id="GO:0019243">
    <property type="term" value="P:methylglyoxal catabolic process to D-lactate via S-lactoyl-glutathione"/>
    <property type="evidence" value="ECO:0007669"/>
    <property type="project" value="InterPro"/>
</dbReference>
<dbReference type="CDD" id="cd07723">
    <property type="entry name" value="hydroxyacylglutathione_hydrolase_MBL-fold"/>
    <property type="match status" value="1"/>
</dbReference>
<dbReference type="Gene3D" id="3.60.15.10">
    <property type="entry name" value="Ribonuclease Z/Hydroxyacylglutathione hydrolase-like"/>
    <property type="match status" value="1"/>
</dbReference>
<dbReference type="HAMAP" id="MF_01374">
    <property type="entry name" value="Glyoxalase_2"/>
    <property type="match status" value="1"/>
</dbReference>
<dbReference type="InterPro" id="IPR035680">
    <property type="entry name" value="Clx_II_MBL"/>
</dbReference>
<dbReference type="InterPro" id="IPR050110">
    <property type="entry name" value="Glyoxalase_II_hydrolase"/>
</dbReference>
<dbReference type="InterPro" id="IPR032282">
    <property type="entry name" value="HAGH_C"/>
</dbReference>
<dbReference type="InterPro" id="IPR017782">
    <property type="entry name" value="Hydroxyacylglutathione_Hdrlase"/>
</dbReference>
<dbReference type="InterPro" id="IPR001279">
    <property type="entry name" value="Metallo-B-lactamas"/>
</dbReference>
<dbReference type="InterPro" id="IPR036866">
    <property type="entry name" value="RibonucZ/Hydroxyglut_hydro"/>
</dbReference>
<dbReference type="NCBIfam" id="TIGR03413">
    <property type="entry name" value="GSH_gloB"/>
    <property type="match status" value="1"/>
</dbReference>
<dbReference type="PANTHER" id="PTHR43705">
    <property type="entry name" value="HYDROXYACYLGLUTATHIONE HYDROLASE"/>
    <property type="match status" value="1"/>
</dbReference>
<dbReference type="PANTHER" id="PTHR43705:SF1">
    <property type="entry name" value="HYDROXYACYLGLUTATHIONE HYDROLASE GLOB"/>
    <property type="match status" value="1"/>
</dbReference>
<dbReference type="Pfam" id="PF16123">
    <property type="entry name" value="HAGH_C"/>
    <property type="match status" value="1"/>
</dbReference>
<dbReference type="Pfam" id="PF00753">
    <property type="entry name" value="Lactamase_B"/>
    <property type="match status" value="1"/>
</dbReference>
<dbReference type="PIRSF" id="PIRSF005457">
    <property type="entry name" value="Glx"/>
    <property type="match status" value="1"/>
</dbReference>
<dbReference type="SMART" id="SM00849">
    <property type="entry name" value="Lactamase_B"/>
    <property type="match status" value="1"/>
</dbReference>
<dbReference type="SUPFAM" id="SSF56281">
    <property type="entry name" value="Metallo-hydrolase/oxidoreductase"/>
    <property type="match status" value="1"/>
</dbReference>